<reference key="1">
    <citation type="journal article" date="2007" name="J. Bacteriol.">
        <title>The complete genome sequence of Roseobacter denitrificans reveals a mixotrophic rather than photosynthetic metabolism.</title>
        <authorList>
            <person name="Swingley W.D."/>
            <person name="Sadekar S."/>
            <person name="Mastrian S.D."/>
            <person name="Matthies H.J."/>
            <person name="Hao J."/>
            <person name="Ramos H."/>
            <person name="Acharya C.R."/>
            <person name="Conrad A.L."/>
            <person name="Taylor H.L."/>
            <person name="Dejesa L.C."/>
            <person name="Shah M.K."/>
            <person name="O'Huallachain M.E."/>
            <person name="Lince M.T."/>
            <person name="Blankenship R.E."/>
            <person name="Beatty J.T."/>
            <person name="Touchman J.W."/>
        </authorList>
    </citation>
    <scope>NUCLEOTIDE SEQUENCE [LARGE SCALE GENOMIC DNA]</scope>
    <source>
        <strain>ATCC 33942 / OCh 114</strain>
    </source>
</reference>
<comment type="function">
    <text evidence="2">Cell wall formation.</text>
</comment>
<comment type="catalytic activity">
    <reaction evidence="2">
        <text>2 D-alanine + ATP = D-alanyl-D-alanine + ADP + phosphate + H(+)</text>
        <dbReference type="Rhea" id="RHEA:11224"/>
        <dbReference type="ChEBI" id="CHEBI:15378"/>
        <dbReference type="ChEBI" id="CHEBI:30616"/>
        <dbReference type="ChEBI" id="CHEBI:43474"/>
        <dbReference type="ChEBI" id="CHEBI:57416"/>
        <dbReference type="ChEBI" id="CHEBI:57822"/>
        <dbReference type="ChEBI" id="CHEBI:456216"/>
        <dbReference type="EC" id="6.3.2.4"/>
    </reaction>
</comment>
<comment type="cofactor">
    <cofactor evidence="1">
        <name>Mg(2+)</name>
        <dbReference type="ChEBI" id="CHEBI:18420"/>
    </cofactor>
    <cofactor evidence="1">
        <name>Mn(2+)</name>
        <dbReference type="ChEBI" id="CHEBI:29035"/>
    </cofactor>
    <text evidence="1">Binds 2 magnesium or manganese ions per subunit.</text>
</comment>
<comment type="pathway">
    <text evidence="2">Cell wall biogenesis; peptidoglycan biosynthesis.</text>
</comment>
<comment type="subcellular location">
    <subcellularLocation>
        <location evidence="2">Cytoplasm</location>
    </subcellularLocation>
</comment>
<comment type="similarity">
    <text evidence="2">Belongs to the D-alanine--D-alanine ligase family.</text>
</comment>
<comment type="sequence caution" evidence="4">
    <conflict type="erroneous initiation">
        <sequence resource="EMBL-CDS" id="ABG32849"/>
    </conflict>
</comment>
<feature type="chain" id="PRO_0000341170" description="D-alanine--D-alanine ligase">
    <location>
        <begin position="1"/>
        <end position="319"/>
    </location>
</feature>
<feature type="domain" description="ATP-grasp" evidence="2">
    <location>
        <begin position="120"/>
        <end position="313"/>
    </location>
</feature>
<feature type="region of interest" description="Disordered" evidence="3">
    <location>
        <begin position="1"/>
        <end position="23"/>
    </location>
</feature>
<feature type="binding site" evidence="2">
    <location>
        <begin position="147"/>
        <end position="197"/>
    </location>
    <ligand>
        <name>ATP</name>
        <dbReference type="ChEBI" id="CHEBI:30616"/>
    </ligand>
</feature>
<feature type="binding site" evidence="2">
    <location>
        <position position="264"/>
    </location>
    <ligand>
        <name>Mg(2+)</name>
        <dbReference type="ChEBI" id="CHEBI:18420"/>
        <label>1</label>
    </ligand>
</feature>
<feature type="binding site" evidence="2">
    <location>
        <position position="280"/>
    </location>
    <ligand>
        <name>Mg(2+)</name>
        <dbReference type="ChEBI" id="CHEBI:18420"/>
        <label>1</label>
    </ligand>
</feature>
<feature type="binding site" evidence="2">
    <location>
        <position position="280"/>
    </location>
    <ligand>
        <name>Mg(2+)</name>
        <dbReference type="ChEBI" id="CHEBI:18420"/>
        <label>2</label>
    </ligand>
</feature>
<feature type="binding site" evidence="2">
    <location>
        <position position="282"/>
    </location>
    <ligand>
        <name>Mg(2+)</name>
        <dbReference type="ChEBI" id="CHEBI:18420"/>
        <label>2</label>
    </ligand>
</feature>
<protein>
    <recommendedName>
        <fullName evidence="2">D-alanine--D-alanine ligase</fullName>
        <ecNumber evidence="2">6.3.2.4</ecNumber>
    </recommendedName>
    <alternativeName>
        <fullName evidence="2">D-Ala-D-Ala ligase</fullName>
    </alternativeName>
    <alternativeName>
        <fullName evidence="2">D-alanylalanine synthetase</fullName>
    </alternativeName>
</protein>
<accession>Q163J4</accession>
<sequence length="319" mass="33854">MTGPEWAHTRGTKVGQSSRTPPKVAVLLGGPSVEREVSLSSGQACAAALRDEGYDVVEIDAGHDLGARLIDAGPDAVLNCLHGRWGEDGCVQGLLEWMGVPYSHSGVLASALAMDKQRSKDAFVAAGLPVVPSVIAKAADVRMGHVMQPPYVVKPNNEGSSVGVYLVHEAANGPPQLSEDMPQEVMVEAFAPGRELTTTVVGDRALTVTDIVTDGWYDYDAKYKPGGSHHVVPADIPADIFDLCMDYALRAHHALGCRGVSRTDFRWDETKGAAGLILLETNTQPGMTATSLTPEQAAVTGMTFGKLCAWMVEDASCDR</sequence>
<name>DDL_ROSDO</name>
<keyword id="KW-0067">ATP-binding</keyword>
<keyword id="KW-0133">Cell shape</keyword>
<keyword id="KW-0961">Cell wall biogenesis/degradation</keyword>
<keyword id="KW-0963">Cytoplasm</keyword>
<keyword id="KW-0436">Ligase</keyword>
<keyword id="KW-0460">Magnesium</keyword>
<keyword id="KW-0464">Manganese</keyword>
<keyword id="KW-0479">Metal-binding</keyword>
<keyword id="KW-0547">Nucleotide-binding</keyword>
<keyword id="KW-0573">Peptidoglycan synthesis</keyword>
<keyword id="KW-1185">Reference proteome</keyword>
<gene>
    <name evidence="2" type="primary">ddl</name>
    <name type="ordered locus">RD1_3351</name>
</gene>
<evidence type="ECO:0000250" key="1"/>
<evidence type="ECO:0000255" key="2">
    <source>
        <dbReference type="HAMAP-Rule" id="MF_00047"/>
    </source>
</evidence>
<evidence type="ECO:0000256" key="3">
    <source>
        <dbReference type="SAM" id="MobiDB-lite"/>
    </source>
</evidence>
<evidence type="ECO:0000305" key="4"/>
<proteinExistence type="inferred from homology"/>
<dbReference type="EC" id="6.3.2.4" evidence="2"/>
<dbReference type="EMBL" id="CP000362">
    <property type="protein sequence ID" value="ABG32849.1"/>
    <property type="status" value="ALT_INIT"/>
    <property type="molecule type" value="Genomic_DNA"/>
</dbReference>
<dbReference type="SMR" id="Q163J4"/>
<dbReference type="STRING" id="375451.RD1_3351"/>
<dbReference type="KEGG" id="rde:RD1_3351"/>
<dbReference type="eggNOG" id="COG1181">
    <property type="taxonomic scope" value="Bacteria"/>
</dbReference>
<dbReference type="HOGENOM" id="CLU_039268_1_1_5"/>
<dbReference type="UniPathway" id="UPA00219"/>
<dbReference type="Proteomes" id="UP000007029">
    <property type="component" value="Chromosome"/>
</dbReference>
<dbReference type="GO" id="GO:0005737">
    <property type="term" value="C:cytoplasm"/>
    <property type="evidence" value="ECO:0007669"/>
    <property type="project" value="UniProtKB-SubCell"/>
</dbReference>
<dbReference type="GO" id="GO:0005524">
    <property type="term" value="F:ATP binding"/>
    <property type="evidence" value="ECO:0007669"/>
    <property type="project" value="UniProtKB-KW"/>
</dbReference>
<dbReference type="GO" id="GO:0008716">
    <property type="term" value="F:D-alanine-D-alanine ligase activity"/>
    <property type="evidence" value="ECO:0007669"/>
    <property type="project" value="UniProtKB-UniRule"/>
</dbReference>
<dbReference type="GO" id="GO:0046872">
    <property type="term" value="F:metal ion binding"/>
    <property type="evidence" value="ECO:0007669"/>
    <property type="project" value="UniProtKB-KW"/>
</dbReference>
<dbReference type="GO" id="GO:0071555">
    <property type="term" value="P:cell wall organization"/>
    <property type="evidence" value="ECO:0007669"/>
    <property type="project" value="UniProtKB-KW"/>
</dbReference>
<dbReference type="GO" id="GO:0009252">
    <property type="term" value="P:peptidoglycan biosynthetic process"/>
    <property type="evidence" value="ECO:0007669"/>
    <property type="project" value="UniProtKB-UniRule"/>
</dbReference>
<dbReference type="GO" id="GO:0008360">
    <property type="term" value="P:regulation of cell shape"/>
    <property type="evidence" value="ECO:0007669"/>
    <property type="project" value="UniProtKB-KW"/>
</dbReference>
<dbReference type="Gene3D" id="3.40.50.20">
    <property type="match status" value="1"/>
</dbReference>
<dbReference type="Gene3D" id="3.30.1490.20">
    <property type="entry name" value="ATP-grasp fold, A domain"/>
    <property type="match status" value="1"/>
</dbReference>
<dbReference type="Gene3D" id="3.30.470.20">
    <property type="entry name" value="ATP-grasp fold, B domain"/>
    <property type="match status" value="1"/>
</dbReference>
<dbReference type="HAMAP" id="MF_00047">
    <property type="entry name" value="Dala_Dala_lig"/>
    <property type="match status" value="1"/>
</dbReference>
<dbReference type="InterPro" id="IPR011761">
    <property type="entry name" value="ATP-grasp"/>
</dbReference>
<dbReference type="InterPro" id="IPR013815">
    <property type="entry name" value="ATP_grasp_subdomain_1"/>
</dbReference>
<dbReference type="InterPro" id="IPR000291">
    <property type="entry name" value="D-Ala_lig_Van_CS"/>
</dbReference>
<dbReference type="InterPro" id="IPR005905">
    <property type="entry name" value="D_ala_D_ala"/>
</dbReference>
<dbReference type="InterPro" id="IPR011095">
    <property type="entry name" value="Dala_Dala_lig_C"/>
</dbReference>
<dbReference type="InterPro" id="IPR011127">
    <property type="entry name" value="Dala_Dala_lig_N"/>
</dbReference>
<dbReference type="InterPro" id="IPR016185">
    <property type="entry name" value="PreATP-grasp_dom_sf"/>
</dbReference>
<dbReference type="NCBIfam" id="TIGR01205">
    <property type="entry name" value="D_ala_D_alaTIGR"/>
    <property type="match status" value="1"/>
</dbReference>
<dbReference type="NCBIfam" id="NF002378">
    <property type="entry name" value="PRK01372.1"/>
    <property type="match status" value="1"/>
</dbReference>
<dbReference type="PANTHER" id="PTHR23132">
    <property type="entry name" value="D-ALANINE--D-ALANINE LIGASE"/>
    <property type="match status" value="1"/>
</dbReference>
<dbReference type="PANTHER" id="PTHR23132:SF23">
    <property type="entry name" value="D-ALANINE--D-ALANINE LIGASE B"/>
    <property type="match status" value="1"/>
</dbReference>
<dbReference type="Pfam" id="PF07478">
    <property type="entry name" value="Dala_Dala_lig_C"/>
    <property type="match status" value="1"/>
</dbReference>
<dbReference type="Pfam" id="PF01820">
    <property type="entry name" value="Dala_Dala_lig_N"/>
    <property type="match status" value="1"/>
</dbReference>
<dbReference type="PIRSF" id="PIRSF039102">
    <property type="entry name" value="Ddl/VanB"/>
    <property type="match status" value="1"/>
</dbReference>
<dbReference type="SUPFAM" id="SSF56059">
    <property type="entry name" value="Glutathione synthetase ATP-binding domain-like"/>
    <property type="match status" value="1"/>
</dbReference>
<dbReference type="SUPFAM" id="SSF52440">
    <property type="entry name" value="PreATP-grasp domain"/>
    <property type="match status" value="1"/>
</dbReference>
<dbReference type="PROSITE" id="PS50975">
    <property type="entry name" value="ATP_GRASP"/>
    <property type="match status" value="1"/>
</dbReference>
<dbReference type="PROSITE" id="PS00843">
    <property type="entry name" value="DALA_DALA_LIGASE_1"/>
    <property type="match status" value="1"/>
</dbReference>
<dbReference type="PROSITE" id="PS00844">
    <property type="entry name" value="DALA_DALA_LIGASE_2"/>
    <property type="match status" value="1"/>
</dbReference>
<organism>
    <name type="scientific">Roseobacter denitrificans (strain ATCC 33942 / OCh 114)</name>
    <name type="common">Erythrobacter sp. (strain OCh 114)</name>
    <name type="synonym">Roseobacter denitrificans</name>
    <dbReference type="NCBI Taxonomy" id="375451"/>
    <lineage>
        <taxon>Bacteria</taxon>
        <taxon>Pseudomonadati</taxon>
        <taxon>Pseudomonadota</taxon>
        <taxon>Alphaproteobacteria</taxon>
        <taxon>Rhodobacterales</taxon>
        <taxon>Roseobacteraceae</taxon>
        <taxon>Roseobacter</taxon>
    </lineage>
</organism>